<evidence type="ECO:0000255" key="1">
    <source>
        <dbReference type="HAMAP-Rule" id="MF_01031"/>
    </source>
</evidence>
<organism>
    <name type="scientific">Mycobacterium bovis (strain BCG / Tokyo 172 / ATCC 35737 / TMC 1019)</name>
    <dbReference type="NCBI Taxonomy" id="561275"/>
    <lineage>
        <taxon>Bacteria</taxon>
        <taxon>Bacillati</taxon>
        <taxon>Actinomycetota</taxon>
        <taxon>Actinomycetes</taxon>
        <taxon>Mycobacteriales</taxon>
        <taxon>Mycobacteriaceae</taxon>
        <taxon>Mycobacterium</taxon>
        <taxon>Mycobacterium tuberculosis complex</taxon>
    </lineage>
</organism>
<reference key="1">
    <citation type="journal article" date="2009" name="Vaccine">
        <title>Whole genome sequence analysis of Mycobacterium bovis bacillus Calmette-Guerin (BCG) Tokyo 172: a comparative study of BCG vaccine substrains.</title>
        <authorList>
            <person name="Seki M."/>
            <person name="Honda I."/>
            <person name="Fujita I."/>
            <person name="Yano I."/>
            <person name="Yamamoto S."/>
            <person name="Koyama A."/>
        </authorList>
    </citation>
    <scope>NUCLEOTIDE SEQUENCE [LARGE SCALE GENOMIC DNA]</scope>
    <source>
        <strain>BCG / Tokyo 172 / ATCC 35737 / TMC 1019</strain>
    </source>
</reference>
<comment type="function">
    <text evidence="1">Catalyzes the isomerization between 2-isopropylmalate and 3-isopropylmalate, via the formation of 2-isopropylmaleate.</text>
</comment>
<comment type="catalytic activity">
    <reaction evidence="1">
        <text>(2R,3S)-3-isopropylmalate = (2S)-2-isopropylmalate</text>
        <dbReference type="Rhea" id="RHEA:32287"/>
        <dbReference type="ChEBI" id="CHEBI:1178"/>
        <dbReference type="ChEBI" id="CHEBI:35121"/>
        <dbReference type="EC" id="4.2.1.33"/>
    </reaction>
</comment>
<comment type="pathway">
    <text evidence="1">Amino-acid biosynthesis; L-leucine biosynthesis; L-leucine from 3-methyl-2-oxobutanoate: step 2/4.</text>
</comment>
<comment type="subunit">
    <text evidence="1">Heterodimer of LeuC and LeuD.</text>
</comment>
<comment type="similarity">
    <text evidence="1">Belongs to the LeuD family. LeuD type 1 subfamily.</text>
</comment>
<feature type="chain" id="PRO_1000149420" description="3-isopropylmalate dehydratase small subunit">
    <location>
        <begin position="1"/>
        <end position="198"/>
    </location>
</feature>
<protein>
    <recommendedName>
        <fullName evidence="1">3-isopropylmalate dehydratase small subunit</fullName>
        <ecNumber evidence="1">4.2.1.33</ecNumber>
    </recommendedName>
    <alternativeName>
        <fullName evidence="1">Alpha-IPM isomerase</fullName>
        <shortName evidence="1">IPMI</shortName>
    </alternativeName>
    <alternativeName>
        <fullName evidence="1">Isopropylmalate isomerase</fullName>
    </alternativeName>
</protein>
<keyword id="KW-0028">Amino-acid biosynthesis</keyword>
<keyword id="KW-0100">Branched-chain amino acid biosynthesis</keyword>
<keyword id="KW-0432">Leucine biosynthesis</keyword>
<keyword id="KW-0456">Lyase</keyword>
<accession>C1AGA2</accession>
<sequence length="198" mass="21780">MEAFHTHSGIGVPLRRSNVDTDQIIPAVFLKRVTRTGFEDGLFAGWRSDPAFVLNLSPFDRGSVLVAGPDFGTGSSREHAVWALMDYGFRVVISSRFGDIFRGNAGKAGLLAAEVAQDDVELLWKLIEQSPGLEITANLQDRIITAATVVLPFKIDDHSAWRLLEGLDDIALTLRKLDEIEAFEGACAYWKPRTLPAP</sequence>
<name>LEUD_MYCBT</name>
<dbReference type="EC" id="4.2.1.33" evidence="1"/>
<dbReference type="EMBL" id="AP010918">
    <property type="protein sequence ID" value="BAH27281.1"/>
    <property type="molecule type" value="Genomic_DNA"/>
</dbReference>
<dbReference type="RefSeq" id="WP_003415110.1">
    <property type="nucleotide sequence ID" value="NZ_CP014566.1"/>
</dbReference>
<dbReference type="SMR" id="C1AGA2"/>
<dbReference type="GeneID" id="45426976"/>
<dbReference type="KEGG" id="mbt:JTY_3003"/>
<dbReference type="HOGENOM" id="CLU_081378_0_1_11"/>
<dbReference type="UniPathway" id="UPA00048">
    <property type="reaction ID" value="UER00071"/>
</dbReference>
<dbReference type="GO" id="GO:0009316">
    <property type="term" value="C:3-isopropylmalate dehydratase complex"/>
    <property type="evidence" value="ECO:0007669"/>
    <property type="project" value="InterPro"/>
</dbReference>
<dbReference type="GO" id="GO:0003861">
    <property type="term" value="F:3-isopropylmalate dehydratase activity"/>
    <property type="evidence" value="ECO:0007669"/>
    <property type="project" value="UniProtKB-UniRule"/>
</dbReference>
<dbReference type="GO" id="GO:0009098">
    <property type="term" value="P:L-leucine biosynthetic process"/>
    <property type="evidence" value="ECO:0007669"/>
    <property type="project" value="UniProtKB-UniRule"/>
</dbReference>
<dbReference type="CDD" id="cd01577">
    <property type="entry name" value="IPMI_Swivel"/>
    <property type="match status" value="1"/>
</dbReference>
<dbReference type="FunFam" id="3.20.19.10:FF:000003">
    <property type="entry name" value="3-isopropylmalate dehydratase small subunit"/>
    <property type="match status" value="1"/>
</dbReference>
<dbReference type="Gene3D" id="3.20.19.10">
    <property type="entry name" value="Aconitase, domain 4"/>
    <property type="match status" value="1"/>
</dbReference>
<dbReference type="HAMAP" id="MF_01031">
    <property type="entry name" value="LeuD_type1"/>
    <property type="match status" value="1"/>
</dbReference>
<dbReference type="InterPro" id="IPR004431">
    <property type="entry name" value="3-IsopropMal_deHydase_ssu"/>
</dbReference>
<dbReference type="InterPro" id="IPR015928">
    <property type="entry name" value="Aconitase/3IPM_dehydase_swvl"/>
</dbReference>
<dbReference type="InterPro" id="IPR000573">
    <property type="entry name" value="AconitaseA/IPMdHydase_ssu_swvl"/>
</dbReference>
<dbReference type="InterPro" id="IPR033940">
    <property type="entry name" value="IPMI_Swivel"/>
</dbReference>
<dbReference type="InterPro" id="IPR050075">
    <property type="entry name" value="LeuD"/>
</dbReference>
<dbReference type="NCBIfam" id="TIGR00171">
    <property type="entry name" value="leuD"/>
    <property type="match status" value="1"/>
</dbReference>
<dbReference type="NCBIfam" id="NF002458">
    <property type="entry name" value="PRK01641.1"/>
    <property type="match status" value="1"/>
</dbReference>
<dbReference type="PANTHER" id="PTHR43345:SF5">
    <property type="entry name" value="3-ISOPROPYLMALATE DEHYDRATASE SMALL SUBUNIT"/>
    <property type="match status" value="1"/>
</dbReference>
<dbReference type="PANTHER" id="PTHR43345">
    <property type="entry name" value="3-ISOPROPYLMALATE DEHYDRATASE SMALL SUBUNIT 2-RELATED-RELATED"/>
    <property type="match status" value="1"/>
</dbReference>
<dbReference type="Pfam" id="PF00694">
    <property type="entry name" value="Aconitase_C"/>
    <property type="match status" value="1"/>
</dbReference>
<dbReference type="SUPFAM" id="SSF52016">
    <property type="entry name" value="LeuD/IlvD-like"/>
    <property type="match status" value="1"/>
</dbReference>
<gene>
    <name evidence="1" type="primary">leuD</name>
    <name type="ordered locus">JTY_3003</name>
</gene>
<proteinExistence type="inferred from homology"/>